<protein>
    <recommendedName>
        <fullName evidence="1">Trigger factor</fullName>
        <shortName evidence="1">TF</shortName>
        <ecNumber evidence="1">5.2.1.8</ecNumber>
    </recommendedName>
    <alternativeName>
        <fullName evidence="1">PPIase</fullName>
    </alternativeName>
</protein>
<reference key="1">
    <citation type="submission" date="2005-10" db="EMBL/GenBank/DDBJ databases">
        <title>Complete sequence of chromosome 1 of Burkholderia sp. 383.</title>
        <authorList>
            <consortium name="US DOE Joint Genome Institute"/>
            <person name="Copeland A."/>
            <person name="Lucas S."/>
            <person name="Lapidus A."/>
            <person name="Barry K."/>
            <person name="Detter J.C."/>
            <person name="Glavina T."/>
            <person name="Hammon N."/>
            <person name="Israni S."/>
            <person name="Pitluck S."/>
            <person name="Chain P."/>
            <person name="Malfatti S."/>
            <person name="Shin M."/>
            <person name="Vergez L."/>
            <person name="Schmutz J."/>
            <person name="Larimer F."/>
            <person name="Land M."/>
            <person name="Kyrpides N."/>
            <person name="Lykidis A."/>
            <person name="Richardson P."/>
        </authorList>
    </citation>
    <scope>NUCLEOTIDE SEQUENCE [LARGE SCALE GENOMIC DNA]</scope>
    <source>
        <strain>ATCC 17760 / DSM 23089 / LMG 22485 / NCIMB 9086 / R18194 / 383</strain>
    </source>
</reference>
<dbReference type="EC" id="5.2.1.8" evidence="1"/>
<dbReference type="EMBL" id="CP000151">
    <property type="protein sequence ID" value="ABB08819.1"/>
    <property type="molecule type" value="Genomic_DNA"/>
</dbReference>
<dbReference type="RefSeq" id="WP_011352362.1">
    <property type="nucleotide sequence ID" value="NC_007510.1"/>
</dbReference>
<dbReference type="SMR" id="Q39FE7"/>
<dbReference type="GeneID" id="45095103"/>
<dbReference type="KEGG" id="bur:Bcep18194_A5225"/>
<dbReference type="PATRIC" id="fig|482957.22.peg.2165"/>
<dbReference type="HOGENOM" id="CLU_033058_2_0_4"/>
<dbReference type="Proteomes" id="UP000002705">
    <property type="component" value="Chromosome 1"/>
</dbReference>
<dbReference type="GO" id="GO:0005737">
    <property type="term" value="C:cytoplasm"/>
    <property type="evidence" value="ECO:0007669"/>
    <property type="project" value="UniProtKB-SubCell"/>
</dbReference>
<dbReference type="GO" id="GO:0003755">
    <property type="term" value="F:peptidyl-prolyl cis-trans isomerase activity"/>
    <property type="evidence" value="ECO:0007669"/>
    <property type="project" value="UniProtKB-UniRule"/>
</dbReference>
<dbReference type="GO" id="GO:0044183">
    <property type="term" value="F:protein folding chaperone"/>
    <property type="evidence" value="ECO:0007669"/>
    <property type="project" value="TreeGrafter"/>
</dbReference>
<dbReference type="GO" id="GO:0043022">
    <property type="term" value="F:ribosome binding"/>
    <property type="evidence" value="ECO:0007669"/>
    <property type="project" value="TreeGrafter"/>
</dbReference>
<dbReference type="GO" id="GO:0051083">
    <property type="term" value="P:'de novo' cotranslational protein folding"/>
    <property type="evidence" value="ECO:0007669"/>
    <property type="project" value="TreeGrafter"/>
</dbReference>
<dbReference type="GO" id="GO:0051301">
    <property type="term" value="P:cell division"/>
    <property type="evidence" value="ECO:0007669"/>
    <property type="project" value="UniProtKB-KW"/>
</dbReference>
<dbReference type="GO" id="GO:0061077">
    <property type="term" value="P:chaperone-mediated protein folding"/>
    <property type="evidence" value="ECO:0007669"/>
    <property type="project" value="TreeGrafter"/>
</dbReference>
<dbReference type="GO" id="GO:0015031">
    <property type="term" value="P:protein transport"/>
    <property type="evidence" value="ECO:0007669"/>
    <property type="project" value="UniProtKB-UniRule"/>
</dbReference>
<dbReference type="GO" id="GO:0043335">
    <property type="term" value="P:protein unfolding"/>
    <property type="evidence" value="ECO:0007669"/>
    <property type="project" value="TreeGrafter"/>
</dbReference>
<dbReference type="FunFam" id="3.10.50.40:FF:000001">
    <property type="entry name" value="Trigger factor"/>
    <property type="match status" value="1"/>
</dbReference>
<dbReference type="Gene3D" id="3.10.50.40">
    <property type="match status" value="1"/>
</dbReference>
<dbReference type="Gene3D" id="3.30.70.1050">
    <property type="entry name" value="Trigger factor ribosome-binding domain"/>
    <property type="match status" value="1"/>
</dbReference>
<dbReference type="Gene3D" id="1.10.3120.10">
    <property type="entry name" value="Trigger factor, C-terminal domain"/>
    <property type="match status" value="1"/>
</dbReference>
<dbReference type="HAMAP" id="MF_00303">
    <property type="entry name" value="Trigger_factor_Tig"/>
    <property type="match status" value="1"/>
</dbReference>
<dbReference type="InterPro" id="IPR046357">
    <property type="entry name" value="PPIase_dom_sf"/>
</dbReference>
<dbReference type="InterPro" id="IPR001179">
    <property type="entry name" value="PPIase_FKBP_dom"/>
</dbReference>
<dbReference type="InterPro" id="IPR005215">
    <property type="entry name" value="Trig_fac"/>
</dbReference>
<dbReference type="InterPro" id="IPR008880">
    <property type="entry name" value="Trigger_fac_C"/>
</dbReference>
<dbReference type="InterPro" id="IPR037041">
    <property type="entry name" value="Trigger_fac_C_sf"/>
</dbReference>
<dbReference type="InterPro" id="IPR008881">
    <property type="entry name" value="Trigger_fac_ribosome-bd_bac"/>
</dbReference>
<dbReference type="InterPro" id="IPR036611">
    <property type="entry name" value="Trigger_fac_ribosome-bd_sf"/>
</dbReference>
<dbReference type="InterPro" id="IPR027304">
    <property type="entry name" value="Trigger_fact/SurA_dom_sf"/>
</dbReference>
<dbReference type="NCBIfam" id="TIGR00115">
    <property type="entry name" value="tig"/>
    <property type="match status" value="1"/>
</dbReference>
<dbReference type="PANTHER" id="PTHR30560">
    <property type="entry name" value="TRIGGER FACTOR CHAPERONE AND PEPTIDYL-PROLYL CIS/TRANS ISOMERASE"/>
    <property type="match status" value="1"/>
</dbReference>
<dbReference type="PANTHER" id="PTHR30560:SF3">
    <property type="entry name" value="TRIGGER FACTOR-LIKE PROTEIN TIG, CHLOROPLASTIC"/>
    <property type="match status" value="1"/>
</dbReference>
<dbReference type="Pfam" id="PF00254">
    <property type="entry name" value="FKBP_C"/>
    <property type="match status" value="1"/>
</dbReference>
<dbReference type="Pfam" id="PF05698">
    <property type="entry name" value="Trigger_C"/>
    <property type="match status" value="1"/>
</dbReference>
<dbReference type="Pfam" id="PF05697">
    <property type="entry name" value="Trigger_N"/>
    <property type="match status" value="1"/>
</dbReference>
<dbReference type="PIRSF" id="PIRSF003095">
    <property type="entry name" value="Trigger_factor"/>
    <property type="match status" value="1"/>
</dbReference>
<dbReference type="SUPFAM" id="SSF54534">
    <property type="entry name" value="FKBP-like"/>
    <property type="match status" value="1"/>
</dbReference>
<dbReference type="SUPFAM" id="SSF109998">
    <property type="entry name" value="Triger factor/SurA peptide-binding domain-like"/>
    <property type="match status" value="1"/>
</dbReference>
<dbReference type="SUPFAM" id="SSF102735">
    <property type="entry name" value="Trigger factor ribosome-binding domain"/>
    <property type="match status" value="1"/>
</dbReference>
<dbReference type="PROSITE" id="PS50059">
    <property type="entry name" value="FKBP_PPIASE"/>
    <property type="match status" value="1"/>
</dbReference>
<gene>
    <name evidence="1" type="primary">tig</name>
    <name type="ordered locus">Bcep18194_A5225</name>
</gene>
<evidence type="ECO:0000255" key="1">
    <source>
        <dbReference type="HAMAP-Rule" id="MF_00303"/>
    </source>
</evidence>
<proteinExistence type="inferred from homology"/>
<keyword id="KW-0131">Cell cycle</keyword>
<keyword id="KW-0132">Cell division</keyword>
<keyword id="KW-0143">Chaperone</keyword>
<keyword id="KW-0963">Cytoplasm</keyword>
<keyword id="KW-0413">Isomerase</keyword>
<keyword id="KW-0697">Rotamase</keyword>
<comment type="function">
    <text evidence="1">Involved in protein export. Acts as a chaperone by maintaining the newly synthesized protein in an open conformation. Functions as a peptidyl-prolyl cis-trans isomerase.</text>
</comment>
<comment type="catalytic activity">
    <reaction evidence="1">
        <text>[protein]-peptidylproline (omega=180) = [protein]-peptidylproline (omega=0)</text>
        <dbReference type="Rhea" id="RHEA:16237"/>
        <dbReference type="Rhea" id="RHEA-COMP:10747"/>
        <dbReference type="Rhea" id="RHEA-COMP:10748"/>
        <dbReference type="ChEBI" id="CHEBI:83833"/>
        <dbReference type="ChEBI" id="CHEBI:83834"/>
        <dbReference type="EC" id="5.2.1.8"/>
    </reaction>
</comment>
<comment type="subcellular location">
    <subcellularLocation>
        <location>Cytoplasm</location>
    </subcellularLocation>
    <text evidence="1">About half TF is bound to the ribosome near the polypeptide exit tunnel while the other half is free in the cytoplasm.</text>
</comment>
<comment type="domain">
    <text evidence="1">Consists of 3 domains; the N-terminus binds the ribosome, the middle domain has PPIase activity, while the C-terminus has intrinsic chaperone activity on its own.</text>
</comment>
<comment type="similarity">
    <text evidence="1">Belongs to the FKBP-type PPIase family. Tig subfamily.</text>
</comment>
<name>TIG_BURL3</name>
<accession>Q39FE7</accession>
<organism>
    <name type="scientific">Burkholderia lata (strain ATCC 17760 / DSM 23089 / LMG 22485 / NCIMB 9086 / R18194 / 383)</name>
    <dbReference type="NCBI Taxonomy" id="482957"/>
    <lineage>
        <taxon>Bacteria</taxon>
        <taxon>Pseudomonadati</taxon>
        <taxon>Pseudomonadota</taxon>
        <taxon>Betaproteobacteria</taxon>
        <taxon>Burkholderiales</taxon>
        <taxon>Burkholderiaceae</taxon>
        <taxon>Burkholderia</taxon>
        <taxon>Burkholderia cepacia complex</taxon>
    </lineage>
</organism>
<sequence length="448" mass="49673">MANVVENLGKLERRVTISLPKDTVQKEIDARIQKLAKTVRMPGFRPGKVPVKMVAQQYAGQVEAEVLSDKIGQEFFTISRAENLRVAGQPSFEPKQEQAEGAYAFDATFEVYPEVKIGDLATAEVERSTTSIGDAEIDRTLDILRKQRVHFHARGEAGEHGDGGADTAAKNGDRVTVDFVGKIDDVAFQGGTAEDFPFVLGEGRMLPEFETAALGLKVGESRTFDLAFPEDYHGKDVAGKTAQFTVTMKKIEWPHLPEIDGEFAKSLGIEDGDLTKMRGEIKDNLEREAKRRTQSIVKNQVMDALLKISELDVPKALIEQDQQRLVEMARQDLAQRGVPNAKDAPIPAEMFTEQAERRVKLGLVLAELVKSNGLEAKPEQIRAEVDEFAKSYEDPKEVVRWYYSNQQRLAEMEAFVVESNVVDFVLGKAKVTDKEVSFEALASASAQA</sequence>
<feature type="chain" id="PRO_0000256536" description="Trigger factor">
    <location>
        <begin position="1"/>
        <end position="448"/>
    </location>
</feature>
<feature type="domain" description="PPIase FKBP-type" evidence="1">
    <location>
        <begin position="172"/>
        <end position="257"/>
    </location>
</feature>